<gene>
    <name evidence="1" type="primary">speH</name>
    <name type="ordered locus">PTH_1441</name>
</gene>
<comment type="function">
    <text evidence="1">Catalyzes the decarboxylation of S-adenosylmethionine to S-adenosylmethioninamine (dcAdoMet), the propylamine donor required for the synthesis of the polyamines spermine and spermidine from the diamine putrescine.</text>
</comment>
<comment type="catalytic activity">
    <reaction evidence="1">
        <text>S-adenosyl-L-methionine + H(+) = S-adenosyl 3-(methylsulfanyl)propylamine + CO2</text>
        <dbReference type="Rhea" id="RHEA:15981"/>
        <dbReference type="ChEBI" id="CHEBI:15378"/>
        <dbReference type="ChEBI" id="CHEBI:16526"/>
        <dbReference type="ChEBI" id="CHEBI:57443"/>
        <dbReference type="ChEBI" id="CHEBI:59789"/>
        <dbReference type="EC" id="4.1.1.50"/>
    </reaction>
</comment>
<comment type="cofactor">
    <cofactor evidence="1">
        <name>pyruvate</name>
        <dbReference type="ChEBI" id="CHEBI:15361"/>
    </cofactor>
    <text evidence="1">Binds 1 pyruvoyl group covalently per subunit.</text>
</comment>
<comment type="pathway">
    <text evidence="1">Amine and polyamine biosynthesis; S-adenosylmethioninamine biosynthesis; S-adenosylmethioninamine from S-adenosyl-L-methionine: step 1/1.</text>
</comment>
<comment type="subunit">
    <text evidence="1">Heterotetramer of two alpha and two beta chains arranged as a dimer of alpha/beta heterodimers.</text>
</comment>
<comment type="PTM">
    <text evidence="1">Is synthesized initially as an inactive proenzyme. Formation of the active enzyme involves a self-maturation process in which the active site pyruvoyl group is generated from an internal serine residue via an autocatalytic post-translational modification. Two non-identical subunits are generated from the proenzyme in this reaction, and the pyruvate is formed at the N-terminus of the alpha chain, which is derived from the carboxyl end of the proenzyme. The post-translation cleavage follows an unusual pathway, termed non-hydrolytic serinolysis, in which the side chain hydroxyl group of the serine supplies its oxygen atom to form the C-terminus of the beta chain, while the remainder of the serine residue undergoes an oxidative deamination to produce ammonia and the pyruvoyl group blocking the N-terminus of the alpha chain.</text>
</comment>
<comment type="similarity">
    <text evidence="1">Belongs to the prokaryotic AdoMetDC family. Type 1 subfamily.</text>
</comment>
<feature type="chain" id="PRO_1000081172" description="S-adenosylmethionine decarboxylase beta chain" evidence="1">
    <location>
        <begin position="1"/>
        <end position="62"/>
    </location>
</feature>
<feature type="chain" id="PRO_1000081173" description="S-adenosylmethionine decarboxylase alpha chain" evidence="1">
    <location>
        <begin position="63"/>
        <end position="126"/>
    </location>
</feature>
<feature type="active site" description="Schiff-base intermediate with substrate; via pyruvic acid" evidence="1">
    <location>
        <position position="63"/>
    </location>
</feature>
<feature type="active site" description="Proton acceptor; for processing activity" evidence="1">
    <location>
        <position position="68"/>
    </location>
</feature>
<feature type="active site" description="Proton donor; for catalytic activity" evidence="1">
    <location>
        <position position="83"/>
    </location>
</feature>
<feature type="site" description="Cleavage (non-hydrolytic); by autolysis" evidence="1">
    <location>
        <begin position="62"/>
        <end position="63"/>
    </location>
</feature>
<feature type="modified residue" description="Pyruvic acid (Ser); by autocatalysis" evidence="1">
    <location>
        <position position="63"/>
    </location>
</feature>
<accession>A5D2A7</accession>
<name>SPEH_PELTS</name>
<keyword id="KW-0068">Autocatalytic cleavage</keyword>
<keyword id="KW-0210">Decarboxylase</keyword>
<keyword id="KW-0456">Lyase</keyword>
<keyword id="KW-0620">Polyamine biosynthesis</keyword>
<keyword id="KW-0670">Pyruvate</keyword>
<keyword id="KW-1185">Reference proteome</keyword>
<keyword id="KW-0949">S-adenosyl-L-methionine</keyword>
<keyword id="KW-0704">Schiff base</keyword>
<keyword id="KW-0745">Spermidine biosynthesis</keyword>
<keyword id="KW-0865">Zymogen</keyword>
<protein>
    <recommendedName>
        <fullName evidence="1">S-adenosylmethionine decarboxylase proenzyme</fullName>
        <shortName evidence="1">AdoMetDC</shortName>
        <shortName evidence="1">SAMDC</shortName>
        <ecNumber evidence="1">4.1.1.50</ecNumber>
    </recommendedName>
    <component>
        <recommendedName>
            <fullName evidence="1">S-adenosylmethionine decarboxylase beta chain</fullName>
        </recommendedName>
    </component>
    <component>
        <recommendedName>
            <fullName evidence="1">S-adenosylmethionine decarboxylase alpha chain</fullName>
        </recommendedName>
    </component>
</protein>
<sequence length="126" mass="14062">MKHLGRHVLAEICGCDFDILNDIEKVEEIMVNAALEAGAEVRECVFHKFSPQGVSGVVVISESHLAIHTWPELGYAAVDVFTCGDKVNPWDACNYLSERFSAKHMTAREMKRGIIPETYLKEVANL</sequence>
<dbReference type="EC" id="4.1.1.50" evidence="1"/>
<dbReference type="EMBL" id="AP009389">
    <property type="protein sequence ID" value="BAF59622.1"/>
    <property type="molecule type" value="Genomic_DNA"/>
</dbReference>
<dbReference type="SMR" id="A5D2A7"/>
<dbReference type="STRING" id="370438.PTH_1441"/>
<dbReference type="KEGG" id="pth:PTH_1441"/>
<dbReference type="eggNOG" id="COG1586">
    <property type="taxonomic scope" value="Bacteria"/>
</dbReference>
<dbReference type="HOGENOM" id="CLU_125470_2_3_9"/>
<dbReference type="UniPathway" id="UPA00331">
    <property type="reaction ID" value="UER00451"/>
</dbReference>
<dbReference type="Proteomes" id="UP000006556">
    <property type="component" value="Chromosome"/>
</dbReference>
<dbReference type="GO" id="GO:0005829">
    <property type="term" value="C:cytosol"/>
    <property type="evidence" value="ECO:0007669"/>
    <property type="project" value="TreeGrafter"/>
</dbReference>
<dbReference type="GO" id="GO:0004014">
    <property type="term" value="F:adenosylmethionine decarboxylase activity"/>
    <property type="evidence" value="ECO:0007669"/>
    <property type="project" value="UniProtKB-UniRule"/>
</dbReference>
<dbReference type="GO" id="GO:0008295">
    <property type="term" value="P:spermidine biosynthetic process"/>
    <property type="evidence" value="ECO:0007669"/>
    <property type="project" value="UniProtKB-UniRule"/>
</dbReference>
<dbReference type="FunFam" id="3.30.360.110:FF:000001">
    <property type="entry name" value="S-adenosylmethionine decarboxylase proenzyme"/>
    <property type="match status" value="1"/>
</dbReference>
<dbReference type="Gene3D" id="3.30.160.750">
    <property type="match status" value="1"/>
</dbReference>
<dbReference type="Gene3D" id="3.30.360.110">
    <property type="entry name" value="S-adenosylmethionine decarboxylase domain"/>
    <property type="match status" value="1"/>
</dbReference>
<dbReference type="HAMAP" id="MF_00464">
    <property type="entry name" value="AdoMetDC_1"/>
    <property type="match status" value="1"/>
</dbReference>
<dbReference type="InterPro" id="IPR042286">
    <property type="entry name" value="AdoMetDC_C"/>
</dbReference>
<dbReference type="InterPro" id="IPR003826">
    <property type="entry name" value="AdoMetDC_fam_prok"/>
</dbReference>
<dbReference type="InterPro" id="IPR042284">
    <property type="entry name" value="AdoMetDC_N"/>
</dbReference>
<dbReference type="InterPro" id="IPR016067">
    <property type="entry name" value="S-AdoMet_deCO2ase_core"/>
</dbReference>
<dbReference type="InterPro" id="IPR017716">
    <property type="entry name" value="S-AdoMet_deCOase_pro-enz"/>
</dbReference>
<dbReference type="NCBIfam" id="TIGR03330">
    <property type="entry name" value="SAM_DCase_Bsu"/>
    <property type="match status" value="1"/>
</dbReference>
<dbReference type="PANTHER" id="PTHR33866">
    <property type="entry name" value="S-ADENOSYLMETHIONINE DECARBOXYLASE PROENZYME"/>
    <property type="match status" value="1"/>
</dbReference>
<dbReference type="PANTHER" id="PTHR33866:SF2">
    <property type="entry name" value="S-ADENOSYLMETHIONINE DECARBOXYLASE PROENZYME"/>
    <property type="match status" value="1"/>
</dbReference>
<dbReference type="Pfam" id="PF02675">
    <property type="entry name" value="AdoMet_dc"/>
    <property type="match status" value="1"/>
</dbReference>
<dbReference type="SUPFAM" id="SSF56276">
    <property type="entry name" value="S-adenosylmethionine decarboxylase"/>
    <property type="match status" value="1"/>
</dbReference>
<reference key="1">
    <citation type="journal article" date="2008" name="Genome Res.">
        <title>The genome of Pelotomaculum thermopropionicum reveals niche-associated evolution in anaerobic microbiota.</title>
        <authorList>
            <person name="Kosaka T."/>
            <person name="Kato S."/>
            <person name="Shimoyama T."/>
            <person name="Ishii S."/>
            <person name="Abe T."/>
            <person name="Watanabe K."/>
        </authorList>
    </citation>
    <scope>NUCLEOTIDE SEQUENCE [LARGE SCALE GENOMIC DNA]</scope>
    <source>
        <strain>DSM 13744 / JCM 10971 / SI</strain>
    </source>
</reference>
<organism>
    <name type="scientific">Pelotomaculum thermopropionicum (strain DSM 13744 / JCM 10971 / SI)</name>
    <dbReference type="NCBI Taxonomy" id="370438"/>
    <lineage>
        <taxon>Bacteria</taxon>
        <taxon>Bacillati</taxon>
        <taxon>Bacillota</taxon>
        <taxon>Clostridia</taxon>
        <taxon>Eubacteriales</taxon>
        <taxon>Desulfotomaculaceae</taxon>
        <taxon>Pelotomaculum</taxon>
    </lineage>
</organism>
<evidence type="ECO:0000255" key="1">
    <source>
        <dbReference type="HAMAP-Rule" id="MF_00464"/>
    </source>
</evidence>
<proteinExistence type="inferred from homology"/>